<comment type="similarity">
    <text evidence="1">Belongs to the bacterial ribosomal protein bL36 family.</text>
</comment>
<dbReference type="EMBL" id="AP009256">
    <property type="protein sequence ID" value="BAF39125.1"/>
    <property type="molecule type" value="Genomic_DNA"/>
</dbReference>
<dbReference type="RefSeq" id="WP_003808136.1">
    <property type="nucleotide sequence ID" value="NC_008618.1"/>
</dbReference>
<dbReference type="SMR" id="A1A092"/>
<dbReference type="STRING" id="367928.BAD_0344"/>
<dbReference type="PaxDb" id="1680-BADO_0351"/>
<dbReference type="GeneID" id="85165080"/>
<dbReference type="KEGG" id="bad:BAD_0344"/>
<dbReference type="HOGENOM" id="CLU_135723_6_2_11"/>
<dbReference type="Proteomes" id="UP000008702">
    <property type="component" value="Chromosome"/>
</dbReference>
<dbReference type="GO" id="GO:0005737">
    <property type="term" value="C:cytoplasm"/>
    <property type="evidence" value="ECO:0007669"/>
    <property type="project" value="UniProtKB-ARBA"/>
</dbReference>
<dbReference type="GO" id="GO:1990904">
    <property type="term" value="C:ribonucleoprotein complex"/>
    <property type="evidence" value="ECO:0007669"/>
    <property type="project" value="UniProtKB-KW"/>
</dbReference>
<dbReference type="GO" id="GO:0005840">
    <property type="term" value="C:ribosome"/>
    <property type="evidence" value="ECO:0007669"/>
    <property type="project" value="UniProtKB-KW"/>
</dbReference>
<dbReference type="GO" id="GO:0003735">
    <property type="term" value="F:structural constituent of ribosome"/>
    <property type="evidence" value="ECO:0007669"/>
    <property type="project" value="InterPro"/>
</dbReference>
<dbReference type="GO" id="GO:0006412">
    <property type="term" value="P:translation"/>
    <property type="evidence" value="ECO:0007669"/>
    <property type="project" value="UniProtKB-UniRule"/>
</dbReference>
<dbReference type="HAMAP" id="MF_00251">
    <property type="entry name" value="Ribosomal_bL36"/>
    <property type="match status" value="1"/>
</dbReference>
<dbReference type="InterPro" id="IPR000473">
    <property type="entry name" value="Ribosomal_bL36"/>
</dbReference>
<dbReference type="InterPro" id="IPR035977">
    <property type="entry name" value="Ribosomal_bL36_sp"/>
</dbReference>
<dbReference type="NCBIfam" id="TIGR01022">
    <property type="entry name" value="rpmJ_bact"/>
    <property type="match status" value="1"/>
</dbReference>
<dbReference type="PANTHER" id="PTHR42888">
    <property type="entry name" value="50S RIBOSOMAL PROTEIN L36, CHLOROPLASTIC"/>
    <property type="match status" value="1"/>
</dbReference>
<dbReference type="PANTHER" id="PTHR42888:SF1">
    <property type="entry name" value="LARGE RIBOSOMAL SUBUNIT PROTEIN BL36C"/>
    <property type="match status" value="1"/>
</dbReference>
<dbReference type="Pfam" id="PF00444">
    <property type="entry name" value="Ribosomal_L36"/>
    <property type="match status" value="1"/>
</dbReference>
<dbReference type="SUPFAM" id="SSF57840">
    <property type="entry name" value="Ribosomal protein L36"/>
    <property type="match status" value="1"/>
</dbReference>
<dbReference type="PROSITE" id="PS00828">
    <property type="entry name" value="RIBOSOMAL_L36"/>
    <property type="match status" value="1"/>
</dbReference>
<sequence length="37" mass="4372">MKVSPSVKRICENCRVIRRHGRVMVICVNPRHKQRQG</sequence>
<name>RL36_BIFAA</name>
<protein>
    <recommendedName>
        <fullName evidence="1">Large ribosomal subunit protein bL36</fullName>
    </recommendedName>
    <alternativeName>
        <fullName evidence="2">50S ribosomal protein L36</fullName>
    </alternativeName>
</protein>
<accession>A1A092</accession>
<proteinExistence type="inferred from homology"/>
<reference key="1">
    <citation type="submission" date="2006-12" db="EMBL/GenBank/DDBJ databases">
        <title>Bifidobacterium adolescentis complete genome sequence.</title>
        <authorList>
            <person name="Suzuki T."/>
            <person name="Tsuda Y."/>
            <person name="Kanou N."/>
            <person name="Inoue T."/>
            <person name="Kumazaki K."/>
            <person name="Nagano S."/>
            <person name="Hirai S."/>
            <person name="Tanaka K."/>
            <person name="Watanabe K."/>
        </authorList>
    </citation>
    <scope>NUCLEOTIDE SEQUENCE [LARGE SCALE GENOMIC DNA]</scope>
    <source>
        <strain>ATCC 15703 / DSM 20083 / NCTC 11814 / E194a</strain>
    </source>
</reference>
<feature type="chain" id="PRO_0000302160" description="Large ribosomal subunit protein bL36">
    <location>
        <begin position="1"/>
        <end position="37"/>
    </location>
</feature>
<gene>
    <name evidence="1" type="primary">rpmJ</name>
    <name type="ordered locus">BAD_0344</name>
</gene>
<keyword id="KW-1185">Reference proteome</keyword>
<keyword id="KW-0687">Ribonucleoprotein</keyword>
<keyword id="KW-0689">Ribosomal protein</keyword>
<evidence type="ECO:0000255" key="1">
    <source>
        <dbReference type="HAMAP-Rule" id="MF_00251"/>
    </source>
</evidence>
<evidence type="ECO:0000305" key="2"/>
<organism>
    <name type="scientific">Bifidobacterium adolescentis (strain ATCC 15703 / DSM 20083 / NCTC 11814 / E194a)</name>
    <dbReference type="NCBI Taxonomy" id="367928"/>
    <lineage>
        <taxon>Bacteria</taxon>
        <taxon>Bacillati</taxon>
        <taxon>Actinomycetota</taxon>
        <taxon>Actinomycetes</taxon>
        <taxon>Bifidobacteriales</taxon>
        <taxon>Bifidobacteriaceae</taxon>
        <taxon>Bifidobacterium</taxon>
    </lineage>
</organism>